<proteinExistence type="inferred from homology"/>
<protein>
    <recommendedName>
        <fullName evidence="1">UPF0154 protein RBAM_017710</fullName>
    </recommendedName>
</protein>
<feature type="chain" id="PRO_1000079570" description="UPF0154 protein RBAM_017710">
    <location>
        <begin position="1"/>
        <end position="72"/>
    </location>
</feature>
<feature type="transmembrane region" description="Helical" evidence="1">
    <location>
        <begin position="4"/>
        <end position="24"/>
    </location>
</feature>
<organism>
    <name type="scientific">Bacillus velezensis (strain DSM 23117 / BGSC 10A6 / LMG 26770 / FZB42)</name>
    <name type="common">Bacillus amyloliquefaciens subsp. plantarum</name>
    <dbReference type="NCBI Taxonomy" id="326423"/>
    <lineage>
        <taxon>Bacteria</taxon>
        <taxon>Bacillati</taxon>
        <taxon>Bacillota</taxon>
        <taxon>Bacilli</taxon>
        <taxon>Bacillales</taxon>
        <taxon>Bacillaceae</taxon>
        <taxon>Bacillus</taxon>
        <taxon>Bacillus amyloliquefaciens group</taxon>
    </lineage>
</organism>
<keyword id="KW-1003">Cell membrane</keyword>
<keyword id="KW-0472">Membrane</keyword>
<keyword id="KW-0812">Transmembrane</keyword>
<keyword id="KW-1133">Transmembrane helix</keyword>
<reference key="1">
    <citation type="journal article" date="2007" name="Nat. Biotechnol.">
        <title>Comparative analysis of the complete genome sequence of the plant growth-promoting bacterium Bacillus amyloliquefaciens FZB42.</title>
        <authorList>
            <person name="Chen X.H."/>
            <person name="Koumoutsi A."/>
            <person name="Scholz R."/>
            <person name="Eisenreich A."/>
            <person name="Schneider K."/>
            <person name="Heinemeyer I."/>
            <person name="Morgenstern B."/>
            <person name="Voss B."/>
            <person name="Hess W.R."/>
            <person name="Reva O."/>
            <person name="Junge H."/>
            <person name="Voigt B."/>
            <person name="Jungblut P.R."/>
            <person name="Vater J."/>
            <person name="Suessmuth R."/>
            <person name="Liesegang H."/>
            <person name="Strittmatter A."/>
            <person name="Gottschalk G."/>
            <person name="Borriss R."/>
        </authorList>
    </citation>
    <scope>NUCLEOTIDE SEQUENCE [LARGE SCALE GENOMIC DNA]</scope>
    <source>
        <strain>DSM 23117 / BGSC 10A6 / LMG 26770 / FZB42</strain>
    </source>
</reference>
<sequence length="72" mass="8269">MTLWVGILVGVVALLIGVALGFFIARKYMMSYLKKNPPINEQMLRMMMMQMGMKPSQKKINQMMKAMNNQAK</sequence>
<accession>A7Z558</accession>
<name>Y1771_BACVZ</name>
<evidence type="ECO:0000255" key="1">
    <source>
        <dbReference type="HAMAP-Rule" id="MF_00363"/>
    </source>
</evidence>
<dbReference type="EMBL" id="CP000560">
    <property type="protein sequence ID" value="ABS74134.1"/>
    <property type="molecule type" value="Genomic_DNA"/>
</dbReference>
<dbReference type="RefSeq" id="WP_003153994.1">
    <property type="nucleotide sequence ID" value="NC_009725.2"/>
</dbReference>
<dbReference type="SMR" id="A7Z558"/>
<dbReference type="GeneID" id="93080903"/>
<dbReference type="KEGG" id="bay:RBAM_017710"/>
<dbReference type="HOGENOM" id="CLU_180108_0_1_9"/>
<dbReference type="Proteomes" id="UP000001120">
    <property type="component" value="Chromosome"/>
</dbReference>
<dbReference type="GO" id="GO:0005886">
    <property type="term" value="C:plasma membrane"/>
    <property type="evidence" value="ECO:0007669"/>
    <property type="project" value="UniProtKB-SubCell"/>
</dbReference>
<dbReference type="HAMAP" id="MF_00363">
    <property type="entry name" value="UPF0154"/>
    <property type="match status" value="1"/>
</dbReference>
<dbReference type="InterPro" id="IPR005359">
    <property type="entry name" value="UPF0154"/>
</dbReference>
<dbReference type="NCBIfam" id="NF002503">
    <property type="entry name" value="PRK01844.1"/>
    <property type="match status" value="1"/>
</dbReference>
<dbReference type="Pfam" id="PF03672">
    <property type="entry name" value="UPF0154"/>
    <property type="match status" value="1"/>
</dbReference>
<comment type="subcellular location">
    <subcellularLocation>
        <location evidence="1">Cell membrane</location>
        <topology evidence="1">Single-pass membrane protein</topology>
    </subcellularLocation>
</comment>
<comment type="similarity">
    <text evidence="1">Belongs to the UPF0154 family.</text>
</comment>
<gene>
    <name type="ordered locus">RBAM_017710</name>
</gene>